<sequence length="647" mass="72914">MLWCPSVLVPLIAVAACLPVLAIGTPLEWEFAITLKSKILFVDEFWRTLASAAHEFDELSALTFDETEELIYFNDQQHRNGSIFSLRRDALMASHIAEQAIQRTGNESVGGLAYDPLNRNLFWSDTLQKKIFFASIDSKVTETPKVLVDLSQEGARPDGVAVDVCRRKLYWTNSNITHPTVESIDLAGTNRQVIIDTDIDMPRGIVVDQLSDRIFWIDDLKGVFFALKSARLDGSDRQLVLHDKHHEPLNLAVTNDAIYWTDKTTKAVWSHPKVPIVKATTTTSPVKAEEEDATETIPDIEPEPVAEVSALLRVANLSEEARGIVARTGFYQRLQKDEHCANIVRKVKERLDLMTKKKQMRSLVDEKTAQLERDHCLNGGTYIADRVLCICPTGFKGSRCEIRECHNFCVHGTCEISDRAYPKCYCQPGFSGERCEISKCSGLCLNGGHCKLEDISEKPSCECPHNFAGERCEQNSTEICALFCRLLKHEADIYVPFGCHDICEELAKDASDKIAIPQYHHLEVCMTPSPWTSNVIIVLVLGIVSCFFLVAVIVHGFRRLYKPKRPRIRKTFVVRKQARTNSSGDTPLTNRPLATEQCEITIENCCNMNICETPCFDPKLVEQTLAKSSNCKEDKKILIHNMDDDLY</sequence>
<keyword id="KW-1003">Cell membrane</keyword>
<keyword id="KW-0221">Differentiation</keyword>
<keyword id="KW-1015">Disulfide bond</keyword>
<keyword id="KW-0245">EGF-like domain</keyword>
<keyword id="KW-0325">Glycoprotein</keyword>
<keyword id="KW-0472">Membrane</keyword>
<keyword id="KW-0896">Oogenesis</keyword>
<keyword id="KW-1185">Reference proteome</keyword>
<keyword id="KW-0677">Repeat</keyword>
<keyword id="KW-0732">Signal</keyword>
<keyword id="KW-0744">Spermatogenesis</keyword>
<keyword id="KW-0812">Transmembrane</keyword>
<keyword id="KW-1133">Transmembrane helix</keyword>
<gene>
    <name evidence="1" type="primary">cue</name>
    <name type="ORF">GL22490</name>
</gene>
<accession>B4H1F5</accession>
<protein>
    <recommendedName>
        <fullName evidence="1">Protein cueball</fullName>
    </recommendedName>
</protein>
<comment type="function">
    <text evidence="1">Has a role in spermatogenesis and oogenesis.</text>
</comment>
<comment type="subcellular location">
    <subcellularLocation>
        <location evidence="4">Cell membrane</location>
        <topology evidence="4">Single-pass type I membrane protein</topology>
    </subcellularLocation>
</comment>
<comment type="similarity">
    <text evidence="4">Belongs to the cueball family.</text>
</comment>
<comment type="sequence caution" evidence="4">
    <conflict type="erroneous gene model prediction">
        <sequence resource="EMBL-CDS" id="EDW30132"/>
    </conflict>
</comment>
<organism>
    <name type="scientific">Drosophila persimilis</name>
    <name type="common">Fruit fly</name>
    <dbReference type="NCBI Taxonomy" id="7234"/>
    <lineage>
        <taxon>Eukaryota</taxon>
        <taxon>Metazoa</taxon>
        <taxon>Ecdysozoa</taxon>
        <taxon>Arthropoda</taxon>
        <taxon>Hexapoda</taxon>
        <taxon>Insecta</taxon>
        <taxon>Pterygota</taxon>
        <taxon>Neoptera</taxon>
        <taxon>Endopterygota</taxon>
        <taxon>Diptera</taxon>
        <taxon>Brachycera</taxon>
        <taxon>Muscomorpha</taxon>
        <taxon>Ephydroidea</taxon>
        <taxon>Drosophilidae</taxon>
        <taxon>Drosophila</taxon>
        <taxon>Sophophora</taxon>
    </lineage>
</organism>
<evidence type="ECO:0000250" key="1">
    <source>
        <dbReference type="UniProtKB" id="Q95RU0"/>
    </source>
</evidence>
<evidence type="ECO:0000255" key="2"/>
<evidence type="ECO:0000255" key="3">
    <source>
        <dbReference type="PROSITE-ProRule" id="PRU00076"/>
    </source>
</evidence>
<evidence type="ECO:0000305" key="4"/>
<evidence type="ECO:0000312" key="5">
    <source>
        <dbReference type="EMBL" id="EDW30132.1"/>
    </source>
</evidence>
<name>CUE_DROPE</name>
<proteinExistence type="inferred from homology"/>
<dbReference type="EMBL" id="CH479202">
    <property type="protein sequence ID" value="EDW30132.1"/>
    <property type="status" value="ALT_SEQ"/>
    <property type="molecule type" value="Genomic_DNA"/>
</dbReference>
<dbReference type="RefSeq" id="XP_002024684.1">
    <property type="nucleotide sequence ID" value="XM_002024648.1"/>
</dbReference>
<dbReference type="SMR" id="B4H1F5"/>
<dbReference type="GlyCosmos" id="B4H1F5">
    <property type="glycosylation" value="5 sites, No reported glycans"/>
</dbReference>
<dbReference type="EnsemblMetazoa" id="XM_026993772.1">
    <property type="protein sequence ID" value="XP_026849573.1"/>
    <property type="gene ID" value="LOC6599578"/>
</dbReference>
<dbReference type="eggNOG" id="KOG1215">
    <property type="taxonomic scope" value="Eukaryota"/>
</dbReference>
<dbReference type="OrthoDB" id="382013at2759"/>
<dbReference type="Proteomes" id="UP000008744">
    <property type="component" value="Unassembled WGS sequence"/>
</dbReference>
<dbReference type="GO" id="GO:0005886">
    <property type="term" value="C:plasma membrane"/>
    <property type="evidence" value="ECO:0007669"/>
    <property type="project" value="UniProtKB-SubCell"/>
</dbReference>
<dbReference type="GO" id="GO:0042813">
    <property type="term" value="F:Wnt receptor activity"/>
    <property type="evidence" value="ECO:0007669"/>
    <property type="project" value="TreeGrafter"/>
</dbReference>
<dbReference type="GO" id="GO:0017147">
    <property type="term" value="F:Wnt-protein binding"/>
    <property type="evidence" value="ECO:0007669"/>
    <property type="project" value="TreeGrafter"/>
</dbReference>
<dbReference type="GO" id="GO:0060070">
    <property type="term" value="P:canonical Wnt signaling pathway"/>
    <property type="evidence" value="ECO:0007669"/>
    <property type="project" value="TreeGrafter"/>
</dbReference>
<dbReference type="GO" id="GO:0048477">
    <property type="term" value="P:oogenesis"/>
    <property type="evidence" value="ECO:0007669"/>
    <property type="project" value="UniProtKB-KW"/>
</dbReference>
<dbReference type="GO" id="GO:0045938">
    <property type="term" value="P:positive regulation of circadian sleep/wake cycle, sleep"/>
    <property type="evidence" value="ECO:0007669"/>
    <property type="project" value="EnsemblMetazoa"/>
</dbReference>
<dbReference type="GO" id="GO:0007283">
    <property type="term" value="P:spermatogenesis"/>
    <property type="evidence" value="ECO:0007669"/>
    <property type="project" value="UniProtKB-KW"/>
</dbReference>
<dbReference type="GO" id="GO:0070328">
    <property type="term" value="P:triglyceride homeostasis"/>
    <property type="evidence" value="ECO:0007669"/>
    <property type="project" value="EnsemblMetazoa"/>
</dbReference>
<dbReference type="Gene3D" id="2.10.25.10">
    <property type="entry name" value="Laminin"/>
    <property type="match status" value="3"/>
</dbReference>
<dbReference type="Gene3D" id="2.120.10.30">
    <property type="entry name" value="TolB, C-terminal domain"/>
    <property type="match status" value="1"/>
</dbReference>
<dbReference type="InterPro" id="IPR011042">
    <property type="entry name" value="6-blade_b-propeller_TolB-like"/>
</dbReference>
<dbReference type="InterPro" id="IPR050778">
    <property type="entry name" value="Cueball_EGF_LRP_Nidogen"/>
</dbReference>
<dbReference type="InterPro" id="IPR000742">
    <property type="entry name" value="EGF-like_dom"/>
</dbReference>
<dbReference type="InterPro" id="IPR000033">
    <property type="entry name" value="LDLR_classB_rpt"/>
</dbReference>
<dbReference type="PANTHER" id="PTHR46513:SF42">
    <property type="entry name" value="PROTEIN CUEBALL"/>
    <property type="match status" value="1"/>
</dbReference>
<dbReference type="PANTHER" id="PTHR46513">
    <property type="entry name" value="VITELLOGENIN RECEPTOR-LIKE PROTEIN-RELATED-RELATED"/>
    <property type="match status" value="1"/>
</dbReference>
<dbReference type="Pfam" id="PF00058">
    <property type="entry name" value="Ldl_recept_b"/>
    <property type="match status" value="1"/>
</dbReference>
<dbReference type="SMART" id="SM00181">
    <property type="entry name" value="EGF"/>
    <property type="match status" value="3"/>
</dbReference>
<dbReference type="SMART" id="SM00135">
    <property type="entry name" value="LY"/>
    <property type="match status" value="4"/>
</dbReference>
<dbReference type="SUPFAM" id="SSF57196">
    <property type="entry name" value="EGF/Laminin"/>
    <property type="match status" value="3"/>
</dbReference>
<dbReference type="SUPFAM" id="SSF63825">
    <property type="entry name" value="YWTD domain"/>
    <property type="match status" value="1"/>
</dbReference>
<dbReference type="PROSITE" id="PS00022">
    <property type="entry name" value="EGF_1"/>
    <property type="match status" value="3"/>
</dbReference>
<dbReference type="PROSITE" id="PS01186">
    <property type="entry name" value="EGF_2"/>
    <property type="match status" value="2"/>
</dbReference>
<dbReference type="PROSITE" id="PS50026">
    <property type="entry name" value="EGF_3"/>
    <property type="match status" value="2"/>
</dbReference>
<dbReference type="PROSITE" id="PS51120">
    <property type="entry name" value="LDLRB"/>
    <property type="match status" value="3"/>
</dbReference>
<reference evidence="5" key="1">
    <citation type="journal article" date="2007" name="Nature">
        <title>Evolution of genes and genomes on the Drosophila phylogeny.</title>
        <authorList>
            <consortium name="Drosophila 12 genomes consortium"/>
        </authorList>
    </citation>
    <scope>NUCLEOTIDE SEQUENCE [LARGE SCALE GENOMIC DNA]</scope>
    <source>
        <strain>MSH-3 / Tucson 14011-0111.49</strain>
    </source>
</reference>
<feature type="signal peptide" evidence="2">
    <location>
        <begin position="1"/>
        <end position="22"/>
    </location>
</feature>
<feature type="chain" id="PRO_0000386574" description="Protein cueball">
    <location>
        <begin position="23"/>
        <end position="647"/>
    </location>
</feature>
<feature type="topological domain" description="Extracellular" evidence="2">
    <location>
        <begin position="23"/>
        <end position="534"/>
    </location>
</feature>
<feature type="transmembrane region" description="Helical" evidence="2">
    <location>
        <begin position="535"/>
        <end position="555"/>
    </location>
</feature>
<feature type="topological domain" description="Cytoplasmic" evidence="2">
    <location>
        <begin position="556"/>
        <end position="647"/>
    </location>
</feature>
<feature type="repeat" description="LDL-receptor class B 1" evidence="2">
    <location>
        <begin position="119"/>
        <end position="166"/>
    </location>
</feature>
<feature type="repeat" description="LDL-receptor class B 2" evidence="2">
    <location>
        <begin position="167"/>
        <end position="211"/>
    </location>
</feature>
<feature type="repeat" description="LDL-receptor class B 3" evidence="2">
    <location>
        <begin position="212"/>
        <end position="257"/>
    </location>
</feature>
<feature type="domain" description="EGF-like 1" evidence="3">
    <location>
        <begin position="365"/>
        <end position="401"/>
    </location>
</feature>
<feature type="domain" description="EGF-like 2" evidence="3">
    <location>
        <begin position="436"/>
        <end position="473"/>
    </location>
</feature>
<feature type="glycosylation site" description="N-linked (GlcNAc...) asparagine" evidence="2">
    <location>
        <position position="80"/>
    </location>
</feature>
<feature type="glycosylation site" description="N-linked (GlcNAc...) asparagine" evidence="2">
    <location>
        <position position="106"/>
    </location>
</feature>
<feature type="glycosylation site" description="N-linked (GlcNAc...) asparagine" evidence="2">
    <location>
        <position position="175"/>
    </location>
</feature>
<feature type="glycosylation site" description="N-linked (GlcNAc...) asparagine" evidence="2">
    <location>
        <position position="316"/>
    </location>
</feature>
<feature type="glycosylation site" description="N-linked (GlcNAc...) asparagine" evidence="2">
    <location>
        <position position="475"/>
    </location>
</feature>
<feature type="disulfide bond" evidence="3">
    <location>
        <begin position="376"/>
        <end position="389"/>
    </location>
</feature>
<feature type="disulfide bond" evidence="3">
    <location>
        <begin position="391"/>
        <end position="400"/>
    </location>
</feature>
<feature type="disulfide bond" evidence="3">
    <location>
        <begin position="440"/>
        <end position="450"/>
    </location>
</feature>
<feature type="disulfide bond" evidence="3">
    <location>
        <begin position="444"/>
        <end position="461"/>
    </location>
</feature>
<feature type="disulfide bond" evidence="3">
    <location>
        <begin position="463"/>
        <end position="472"/>
    </location>
</feature>